<evidence type="ECO:0000255" key="1">
    <source>
        <dbReference type="HAMAP-Rule" id="MF_00209"/>
    </source>
</evidence>
<evidence type="ECO:0000269" key="2">
    <source>
    </source>
</evidence>
<evidence type="ECO:0000303" key="3">
    <source>
    </source>
</evidence>
<evidence type="ECO:0000305" key="4">
    <source>
    </source>
</evidence>
<evidence type="ECO:0000312" key="5">
    <source>
        <dbReference type="EMBL" id="ADE03387.1"/>
    </source>
</evidence>
<dbReference type="EC" id="3.6.1.1" evidence="1 2"/>
<dbReference type="EMBL" id="CP001956">
    <property type="protein sequence ID" value="ADE03387.1"/>
    <property type="molecule type" value="Genomic_DNA"/>
</dbReference>
<dbReference type="RefSeq" id="WP_004044208.1">
    <property type="nucleotide sequence ID" value="NC_013967.1"/>
</dbReference>
<dbReference type="SMR" id="D4GT97"/>
<dbReference type="STRING" id="309800.HVO_0729"/>
<dbReference type="PaxDb" id="309800-C498_15088"/>
<dbReference type="EnsemblBacteria" id="ADE03387">
    <property type="protein sequence ID" value="ADE03387"/>
    <property type="gene ID" value="HVO_0729"/>
</dbReference>
<dbReference type="GeneID" id="8925075"/>
<dbReference type="KEGG" id="hvo:HVO_0729"/>
<dbReference type="PATRIC" id="fig|309800.29.peg.2912"/>
<dbReference type="eggNOG" id="arCOG01711">
    <property type="taxonomic scope" value="Archaea"/>
</dbReference>
<dbReference type="HOGENOM" id="CLU_073198_1_2_2"/>
<dbReference type="OrthoDB" id="134160at2157"/>
<dbReference type="BRENDA" id="3.6.1.1">
    <property type="organism ID" value="2561"/>
</dbReference>
<dbReference type="Proteomes" id="UP000008243">
    <property type="component" value="Chromosome"/>
</dbReference>
<dbReference type="GO" id="GO:0005737">
    <property type="term" value="C:cytoplasm"/>
    <property type="evidence" value="ECO:0007669"/>
    <property type="project" value="UniProtKB-SubCell"/>
</dbReference>
<dbReference type="GO" id="GO:0004427">
    <property type="term" value="F:inorganic diphosphate phosphatase activity"/>
    <property type="evidence" value="ECO:0000314"/>
    <property type="project" value="UniProtKB"/>
</dbReference>
<dbReference type="GO" id="GO:0000287">
    <property type="term" value="F:magnesium ion binding"/>
    <property type="evidence" value="ECO:0000314"/>
    <property type="project" value="UniProtKB"/>
</dbReference>
<dbReference type="GO" id="GO:0006796">
    <property type="term" value="P:phosphate-containing compound metabolic process"/>
    <property type="evidence" value="ECO:0007669"/>
    <property type="project" value="InterPro"/>
</dbReference>
<dbReference type="CDD" id="cd00412">
    <property type="entry name" value="pyrophosphatase"/>
    <property type="match status" value="1"/>
</dbReference>
<dbReference type="FunFam" id="3.90.80.10:FF:000003">
    <property type="entry name" value="Inorganic pyrophosphatase"/>
    <property type="match status" value="1"/>
</dbReference>
<dbReference type="Gene3D" id="3.90.80.10">
    <property type="entry name" value="Inorganic pyrophosphatase"/>
    <property type="match status" value="1"/>
</dbReference>
<dbReference type="HAMAP" id="MF_00209">
    <property type="entry name" value="Inorganic_PPase"/>
    <property type="match status" value="1"/>
</dbReference>
<dbReference type="InterPro" id="IPR008162">
    <property type="entry name" value="Pyrophosphatase"/>
</dbReference>
<dbReference type="InterPro" id="IPR036649">
    <property type="entry name" value="Pyrophosphatase_sf"/>
</dbReference>
<dbReference type="PANTHER" id="PTHR10286">
    <property type="entry name" value="INORGANIC PYROPHOSPHATASE"/>
    <property type="match status" value="1"/>
</dbReference>
<dbReference type="Pfam" id="PF00719">
    <property type="entry name" value="Pyrophosphatase"/>
    <property type="match status" value="1"/>
</dbReference>
<dbReference type="SUPFAM" id="SSF50324">
    <property type="entry name" value="Inorganic pyrophosphatase"/>
    <property type="match status" value="1"/>
</dbReference>
<sequence length="177" mass="20372">MVNLWEDMETGPNAPDEIYAVVECLKGERNKYEYDKDIPGVVLDRVLHSNVHYPSDYGFIPQTYYDDEDPFDVLVLVEDQTFPGCVIEARPVALMKMDDDGEQDDKVIAVPVEDPRYDHIEDLDDIPQQTLDEIDEFFATYKNLEAGKEVETLGWEDKQAAKDAIEHAMDLYEENFA</sequence>
<accession>D4GT97</accession>
<accession>L9UQG2</accession>
<comment type="function">
    <text evidence="1 2 4">Catalyzes the hydrolysis of inorganic pyrophosphate (PPi) forming two phosphate ions (By similarity) (PubMed:26546423). The hydrolysis of PPi by inorganic pyrophosphatase releases a considerable amount of energy that can drive unfavorable biochemical transformations to completion (Probable). Is not active on nucleoside triphosphates (ATP, TTP, GTP, or CTP) or nucleoside diphosphate (ADP) (PubMed:26546423).</text>
</comment>
<comment type="catalytic activity">
    <reaction evidence="1 2">
        <text>diphosphate + H2O = 2 phosphate + H(+)</text>
        <dbReference type="Rhea" id="RHEA:24576"/>
        <dbReference type="ChEBI" id="CHEBI:15377"/>
        <dbReference type="ChEBI" id="CHEBI:15378"/>
        <dbReference type="ChEBI" id="CHEBI:33019"/>
        <dbReference type="ChEBI" id="CHEBI:43474"/>
        <dbReference type="EC" id="3.6.1.1"/>
    </reaction>
</comment>
<comment type="cofactor">
    <cofactor evidence="1 2">
        <name>Mg(2+)</name>
        <dbReference type="ChEBI" id="CHEBI:18420"/>
    </cofactor>
</comment>
<comment type="activity regulation">
    <text evidence="2">Inhibited by sodium fluoride (NaF) in vitro, similarly to other class A type inorganic pyrophosphatases.</text>
</comment>
<comment type="biophysicochemical properties">
    <kinetics>
        <KM evidence="2">0.55 mM for diphosphate (at 42 degrees Celsius)</KM>
        <KM evidence="2">0.26 mM for diphosphate (at 25 degrees Celsius)</KM>
        <Vmax evidence="2">465.0 umol/min/mg enzyme (at 42 degrees Celsius)</Vmax>
        <Vmax evidence="2">53.0 umol/min/mg enzyme (at 25 degrees Celsius)</Vmax>
        <text evidence="2">Displays non-Michaelis-Menten kinetics for PPi hydrolysis. Hill coefficients indicate cooperative binding to PPi and Mg(2+).</text>
    </kinetics>
    <phDependence>
        <text evidence="2">Optimum pH is 8-9.</text>
    </phDependence>
    <temperatureDependence>
        <text evidence="2">Optimum temperature is 42 degrees Celsius. Is moderately thermostable, with a half-life of thermal inactivation of 2 hours at 65 degrees Celsius, and retains 82% activity after incubation for 2 hours at 42 degrees Celsius.</text>
    </temperatureDependence>
</comment>
<comment type="subunit">
    <text evidence="1 2">Homohexamer (By similarity) (PubMed:26546423). Also forms homotrimers, but the trimeric form is 23% less active than the hexamer. In fact, likely forms a dimer of trimers (PubMed:26546423).</text>
</comment>
<comment type="subcellular location">
    <subcellularLocation>
        <location evidence="1">Cytoplasm</location>
    </subcellularLocation>
</comment>
<comment type="biotechnology">
    <text evidence="2">Inorganic pyrophosphatases are used in a wide variety of biotechnology applications based on the ability of these enzymes to drive reactions forward and generate an easily assayed product. Since HvPPA displays robust activity under high-salt conditions and in organic solvents, it could be a valuable tool for use in bioindustry.</text>
</comment>
<comment type="miscellaneous">
    <text evidence="2">A unique feature of H.volcanii PPA (HvPPA) is its high tolerance to organic solvents, with little if any enzyme inactivation after 2 hours of incubation in buffers supplemented with 50% (vol/vol) dimethyl sulfoxide (DMSO), dimethylformamide (DMF), ethanol, or methanol. The catalytic activity of HvPPA is also found to be robust when assayed in organic solvents. Moreover, HvPPA is fully active over a wide range of salt concentrations.</text>
</comment>
<comment type="similarity">
    <text evidence="1">Belongs to the PPase family.</text>
</comment>
<proteinExistence type="evidence at protein level"/>
<keyword id="KW-0963">Cytoplasm</keyword>
<keyword id="KW-0378">Hydrolase</keyword>
<keyword id="KW-0460">Magnesium</keyword>
<keyword id="KW-0479">Metal-binding</keyword>
<keyword id="KW-1185">Reference proteome</keyword>
<feature type="chain" id="PRO_0000446107" description="Inorganic pyrophosphatase">
    <location>
        <begin position="1"/>
        <end position="177"/>
    </location>
</feature>
<feature type="binding site" evidence="1">
    <location>
        <position position="31"/>
    </location>
    <ligand>
        <name>substrate</name>
    </ligand>
</feature>
<feature type="binding site" evidence="1">
    <location>
        <position position="45"/>
    </location>
    <ligand>
        <name>substrate</name>
    </ligand>
</feature>
<feature type="binding site" evidence="1">
    <location>
        <position position="57"/>
    </location>
    <ligand>
        <name>substrate</name>
    </ligand>
</feature>
<feature type="binding site" evidence="1">
    <location>
        <position position="67"/>
    </location>
    <ligand>
        <name>Mg(2+)</name>
        <dbReference type="ChEBI" id="CHEBI:18420"/>
        <label>1</label>
    </ligand>
</feature>
<feature type="binding site" evidence="1">
    <location>
        <position position="72"/>
    </location>
    <ligand>
        <name>Mg(2+)</name>
        <dbReference type="ChEBI" id="CHEBI:18420"/>
        <label>1</label>
    </ligand>
</feature>
<feature type="binding site" evidence="1">
    <location>
        <position position="72"/>
    </location>
    <ligand>
        <name>Mg(2+)</name>
        <dbReference type="ChEBI" id="CHEBI:18420"/>
        <label>2</label>
    </ligand>
</feature>
<feature type="binding site" evidence="1">
    <location>
        <position position="104"/>
    </location>
    <ligand>
        <name>Mg(2+)</name>
        <dbReference type="ChEBI" id="CHEBI:18420"/>
        <label>1</label>
    </ligand>
</feature>
<feature type="binding site" evidence="1">
    <location>
        <position position="141"/>
    </location>
    <ligand>
        <name>substrate</name>
    </ligand>
</feature>
<protein>
    <recommendedName>
        <fullName evidence="1 3">Inorganic pyrophosphatase</fullName>
        <shortName evidence="3">PPA</shortName>
        <ecNumber evidence="1 2">3.6.1.1</ecNumber>
    </recommendedName>
    <alternativeName>
        <fullName evidence="1">Pyrophosphate phospho-hydrolase</fullName>
        <shortName evidence="1">PPase</shortName>
    </alternativeName>
</protein>
<gene>
    <name evidence="5" type="primary">ipp</name>
    <name evidence="1" type="synonym">ppa</name>
    <name evidence="5" type="ordered locus">HVO_0729</name>
</gene>
<organism>
    <name type="scientific">Haloferax volcanii (strain ATCC 29605 / DSM 3757 / JCM 8879 / NBRC 14742 / NCIMB 2012 / VKM B-1768 / DS2)</name>
    <name type="common">Halobacterium volcanii</name>
    <dbReference type="NCBI Taxonomy" id="309800"/>
    <lineage>
        <taxon>Archaea</taxon>
        <taxon>Methanobacteriati</taxon>
        <taxon>Methanobacteriota</taxon>
        <taxon>Stenosarchaea group</taxon>
        <taxon>Halobacteria</taxon>
        <taxon>Halobacteriales</taxon>
        <taxon>Haloferacaceae</taxon>
        <taxon>Haloferax</taxon>
    </lineage>
</organism>
<reference key="1">
    <citation type="journal article" date="2010" name="PLoS ONE">
        <title>The complete genome sequence of Haloferax volcanii DS2, a model archaeon.</title>
        <authorList>
            <person name="Hartman A.L."/>
            <person name="Norais C."/>
            <person name="Badger J.H."/>
            <person name="Delmas S."/>
            <person name="Haldenby S."/>
            <person name="Madupu R."/>
            <person name="Robinson J."/>
            <person name="Khouri H."/>
            <person name="Ren Q."/>
            <person name="Lowe T.M."/>
            <person name="Maupin-Furlow J."/>
            <person name="Pohlschroder M."/>
            <person name="Daniels C."/>
            <person name="Pfeiffer F."/>
            <person name="Allers T."/>
            <person name="Eisen J.A."/>
        </authorList>
    </citation>
    <scope>NUCLEOTIDE SEQUENCE [LARGE SCALE GENOMIC DNA]</scope>
    <source>
        <strain>ATCC 29605 / DSM 3757 / JCM 8879 / NBRC 14742 / NCIMB 2012 / VKM B-1768 / DS2</strain>
    </source>
</reference>
<reference key="2">
    <citation type="journal article" date="2016" name="Appl. Environ. Microbiol.">
        <title>Archaeal inorganic pyrophosphatase displays robust activity under high-salt conditions and in organic solvents.</title>
        <authorList>
            <person name="McMillan L.J."/>
            <person name="Hepowit N.L."/>
            <person name="Maupin-Furlow J.A."/>
        </authorList>
    </citation>
    <scope>FUNCTION</scope>
    <scope>CATALYTIC ACTIVITY</scope>
    <scope>COFACTOR</scope>
    <scope>BIOPHYSICOCHEMICAL PROPERTIES</scope>
    <scope>SUBSTRATE SPECIFICITY</scope>
    <scope>ACTIVITY REGULATION</scope>
    <scope>SUBUNIT</scope>
    <scope>BIOTECHNOLOGY</scope>
    <source>
        <strain>ATCC 29605 / DSM 3757 / JCM 8879 / NBRC 14742 / NCIMB 2012 / VKM B-1768 / DS2</strain>
    </source>
</reference>
<name>IPYR_HALVD</name>